<protein>
    <recommendedName>
        <fullName>Ig lambda-2 chain C region</fullName>
    </recommendedName>
</protein>
<keyword id="KW-1015">Disulfide bond</keyword>
<keyword id="KW-0393">Immunoglobulin domain</keyword>
<keyword id="KW-1185">Reference proteome</keyword>
<name>LAC2_RAT</name>
<sequence length="104" mass="11318">QPKSTPTLTVFPPSTEELQGNKATLVCLISDFYPSDVEVAWKANGAPISQGVDTANPTKQGNKYIASSFLRLTAEQWRSRNSFTCQVTHEGNTVEKSLSPAECV</sequence>
<organism>
    <name type="scientific">Rattus norvegicus</name>
    <name type="common">Rat</name>
    <dbReference type="NCBI Taxonomy" id="10116"/>
    <lineage>
        <taxon>Eukaryota</taxon>
        <taxon>Metazoa</taxon>
        <taxon>Chordata</taxon>
        <taxon>Craniata</taxon>
        <taxon>Vertebrata</taxon>
        <taxon>Euteleostomi</taxon>
        <taxon>Mammalia</taxon>
        <taxon>Eutheria</taxon>
        <taxon>Euarchontoglires</taxon>
        <taxon>Glires</taxon>
        <taxon>Rodentia</taxon>
        <taxon>Myomorpha</taxon>
        <taxon>Muroidea</taxon>
        <taxon>Muridae</taxon>
        <taxon>Murinae</taxon>
        <taxon>Rattus</taxon>
    </lineage>
</organism>
<accession>P20767</accession>
<proteinExistence type="predicted"/>
<reference key="1">
    <citation type="journal article" date="1987" name="Gene">
        <title>The immunoglobulin lambda locus in rat consists of two C lambda genes and a single V lambda gene.</title>
        <authorList>
            <person name="Steen M.L."/>
            <person name="Hellman L."/>
            <person name="Pettersson U."/>
        </authorList>
    </citation>
    <scope>NUCLEOTIDE SEQUENCE [GENOMIC DNA]</scope>
</reference>
<evidence type="ECO:0000255" key="1">
    <source>
        <dbReference type="PROSITE-ProRule" id="PRU00114"/>
    </source>
</evidence>
<evidence type="ECO:0000305" key="2"/>
<dbReference type="EMBL" id="M22521">
    <property type="protein sequence ID" value="AAA41420.1"/>
    <property type="status" value="ALT_INIT"/>
    <property type="molecule type" value="Genomic_DNA"/>
</dbReference>
<dbReference type="PIR" id="B27390">
    <property type="entry name" value="B27390"/>
</dbReference>
<dbReference type="SMR" id="P20767"/>
<dbReference type="FunCoup" id="P20767">
    <property type="interactions" value="183"/>
</dbReference>
<dbReference type="STRING" id="10116.ENSRNOP00000054780"/>
<dbReference type="GlyGen" id="P20767">
    <property type="glycosylation" value="1 site, 1 O-linked glycan (1 site)"/>
</dbReference>
<dbReference type="VEuPathDB" id="HostDB:ENSRNOG00000050000"/>
<dbReference type="HOGENOM" id="CLU_077975_6_3_1"/>
<dbReference type="InParanoid" id="P20767"/>
<dbReference type="OrthoDB" id="9838202at2759"/>
<dbReference type="PhylomeDB" id="P20767"/>
<dbReference type="Proteomes" id="UP000002494">
    <property type="component" value="Chromosome 11"/>
</dbReference>
<dbReference type="Bgee" id="ENSRNOG00000050000">
    <property type="expression patterns" value="Expressed in spleen and 19 other cell types or tissues"/>
</dbReference>
<dbReference type="GO" id="GO:0071735">
    <property type="term" value="C:IgG immunoglobulin complex"/>
    <property type="evidence" value="ECO:0000318"/>
    <property type="project" value="GO_Central"/>
</dbReference>
<dbReference type="GO" id="GO:0003823">
    <property type="term" value="F:antigen binding"/>
    <property type="evidence" value="ECO:0000318"/>
    <property type="project" value="GO_Central"/>
</dbReference>
<dbReference type="GO" id="GO:0016064">
    <property type="term" value="P:immunoglobulin mediated immune response"/>
    <property type="evidence" value="ECO:0000318"/>
    <property type="project" value="GO_Central"/>
</dbReference>
<dbReference type="CDD" id="cd07699">
    <property type="entry name" value="IgC1_L"/>
    <property type="match status" value="1"/>
</dbReference>
<dbReference type="FunFam" id="2.60.40.10:FF:000283">
    <property type="entry name" value="Immunoglobulin kappa constant"/>
    <property type="match status" value="1"/>
</dbReference>
<dbReference type="Gene3D" id="2.60.40.10">
    <property type="entry name" value="Immunoglobulins"/>
    <property type="match status" value="1"/>
</dbReference>
<dbReference type="InterPro" id="IPR007110">
    <property type="entry name" value="Ig-like_dom"/>
</dbReference>
<dbReference type="InterPro" id="IPR036179">
    <property type="entry name" value="Ig-like_dom_sf"/>
</dbReference>
<dbReference type="InterPro" id="IPR013783">
    <property type="entry name" value="Ig-like_fold"/>
</dbReference>
<dbReference type="InterPro" id="IPR003006">
    <property type="entry name" value="Ig/MHC_CS"/>
</dbReference>
<dbReference type="InterPro" id="IPR003597">
    <property type="entry name" value="Ig_C1-set"/>
</dbReference>
<dbReference type="InterPro" id="IPR050160">
    <property type="entry name" value="MHC/Immunoglobulin"/>
</dbReference>
<dbReference type="PANTHER" id="PTHR19944:SF98">
    <property type="entry name" value="IG-LIKE DOMAIN-CONTAINING PROTEIN"/>
    <property type="match status" value="1"/>
</dbReference>
<dbReference type="PANTHER" id="PTHR19944">
    <property type="entry name" value="MHC CLASS II-RELATED"/>
    <property type="match status" value="1"/>
</dbReference>
<dbReference type="Pfam" id="PF07654">
    <property type="entry name" value="C1-set"/>
    <property type="match status" value="1"/>
</dbReference>
<dbReference type="SMART" id="SM00407">
    <property type="entry name" value="IGc1"/>
    <property type="match status" value="1"/>
</dbReference>
<dbReference type="SUPFAM" id="SSF48726">
    <property type="entry name" value="Immunoglobulin"/>
    <property type="match status" value="1"/>
</dbReference>
<dbReference type="PROSITE" id="PS50835">
    <property type="entry name" value="IG_LIKE"/>
    <property type="match status" value="1"/>
</dbReference>
<dbReference type="PROSITE" id="PS00290">
    <property type="entry name" value="IG_MHC"/>
    <property type="match status" value="1"/>
</dbReference>
<feature type="chain" id="PRO_0000153616" description="Ig lambda-2 chain C region">
    <location>
        <begin position="1" status="less than"/>
        <end position="104"/>
    </location>
</feature>
<feature type="domain" description="Ig-like">
    <location>
        <begin position="6"/>
        <end position="99"/>
    </location>
</feature>
<feature type="disulfide bond" evidence="1">
    <location>
        <begin position="27"/>
        <end position="85"/>
    </location>
</feature>
<feature type="disulfide bond" description="Interchain (with heavy chain)" evidence="1">
    <location>
        <position position="103"/>
    </location>
</feature>
<feature type="non-terminal residue">
    <location>
        <position position="1"/>
    </location>
</feature>
<comment type="sequence caution" evidence="2">
    <conflict type="erroneous initiation">
        <sequence resource="EMBL-CDS" id="AAA41420"/>
    </conflict>
</comment>